<gene>
    <name evidence="1" type="primary">hemL</name>
    <name type="ordered locus">ACP_2074</name>
</gene>
<evidence type="ECO:0000255" key="1">
    <source>
        <dbReference type="HAMAP-Rule" id="MF_00375"/>
    </source>
</evidence>
<protein>
    <recommendedName>
        <fullName evidence="1">Glutamate-1-semialdehyde 2,1-aminomutase</fullName>
        <shortName evidence="1">GSA</shortName>
        <ecNumber evidence="1">5.4.3.8</ecNumber>
    </recommendedName>
    <alternativeName>
        <fullName evidence="1">Glutamate-1-semialdehyde aminotransferase</fullName>
        <shortName evidence="1">GSA-AT</shortName>
    </alternativeName>
</protein>
<reference key="1">
    <citation type="journal article" date="2009" name="Appl. Environ. Microbiol.">
        <title>Three genomes from the phylum Acidobacteria provide insight into the lifestyles of these microorganisms in soils.</title>
        <authorList>
            <person name="Ward N.L."/>
            <person name="Challacombe J.F."/>
            <person name="Janssen P.H."/>
            <person name="Henrissat B."/>
            <person name="Coutinho P.M."/>
            <person name="Wu M."/>
            <person name="Xie G."/>
            <person name="Haft D.H."/>
            <person name="Sait M."/>
            <person name="Badger J."/>
            <person name="Barabote R.D."/>
            <person name="Bradley B."/>
            <person name="Brettin T.S."/>
            <person name="Brinkac L.M."/>
            <person name="Bruce D."/>
            <person name="Creasy T."/>
            <person name="Daugherty S.C."/>
            <person name="Davidsen T.M."/>
            <person name="DeBoy R.T."/>
            <person name="Detter J.C."/>
            <person name="Dodson R.J."/>
            <person name="Durkin A.S."/>
            <person name="Ganapathy A."/>
            <person name="Gwinn-Giglio M."/>
            <person name="Han C.S."/>
            <person name="Khouri H."/>
            <person name="Kiss H."/>
            <person name="Kothari S.P."/>
            <person name="Madupu R."/>
            <person name="Nelson K.E."/>
            <person name="Nelson W.C."/>
            <person name="Paulsen I."/>
            <person name="Penn K."/>
            <person name="Ren Q."/>
            <person name="Rosovitz M.J."/>
            <person name="Selengut J.D."/>
            <person name="Shrivastava S."/>
            <person name="Sullivan S.A."/>
            <person name="Tapia R."/>
            <person name="Thompson L.S."/>
            <person name="Watkins K.L."/>
            <person name="Yang Q."/>
            <person name="Yu C."/>
            <person name="Zafar N."/>
            <person name="Zhou L."/>
            <person name="Kuske C.R."/>
        </authorList>
    </citation>
    <scope>NUCLEOTIDE SEQUENCE [LARGE SCALE GENOMIC DNA]</scope>
    <source>
        <strain>ATCC 51196 / DSM 11244 / BCRC 80197 / JCM 7670 / NBRC 15755 / NCIMB 13165 / 161</strain>
    </source>
</reference>
<sequence>MIRSHMLRERAERLLPGGVDSPVRAFRAVGGEPPFLVKAEGACLWDADGNQYLDYFGSWGPMILGHAFPPVIEAIQKQAAFSTSFGASTPSEGDLAELVVRAYPSMEKLRFVSSGTEATMSALRLARAYTKRKYIVKFDGCYHGHSDGLLAKAGSGLATFGIPGSAGVPEEIAQLTLTLPFNNLDAVEAAFAAHRNEIACIIVEPVAGNMGCVVPDEGYLQGLRELTRREGALLIFDEVMTGFRVAFGGVQELRQVRPDLTTLGKIVGGGMPCGAFGGPAEIMDLLAPLGPVYQAGTLSGNPLAMAAGMATVSHLESSKEWLYPQLEQMSAAVAQGVAEEAARAGIPLTTNRQGSMFTWFFTGQPVRDYATAESCDTRRFAQFHRGMLDHGVWLPPSQFEAAFLGVAHTMHHVEQTVTAAREVFAAMQS</sequence>
<dbReference type="EC" id="5.4.3.8" evidence="1"/>
<dbReference type="EMBL" id="CP001472">
    <property type="protein sequence ID" value="ACO31495.1"/>
    <property type="molecule type" value="Genomic_DNA"/>
</dbReference>
<dbReference type="SMR" id="C1F911"/>
<dbReference type="FunCoup" id="C1F911">
    <property type="interactions" value="553"/>
</dbReference>
<dbReference type="STRING" id="240015.ACP_2074"/>
<dbReference type="KEGG" id="aca:ACP_2074"/>
<dbReference type="eggNOG" id="COG0001">
    <property type="taxonomic scope" value="Bacteria"/>
</dbReference>
<dbReference type="HOGENOM" id="CLU_016922_1_5_0"/>
<dbReference type="InParanoid" id="C1F911"/>
<dbReference type="OrthoDB" id="9807885at2"/>
<dbReference type="UniPathway" id="UPA00251">
    <property type="reaction ID" value="UER00317"/>
</dbReference>
<dbReference type="Proteomes" id="UP000002207">
    <property type="component" value="Chromosome"/>
</dbReference>
<dbReference type="GO" id="GO:0005737">
    <property type="term" value="C:cytoplasm"/>
    <property type="evidence" value="ECO:0007669"/>
    <property type="project" value="UniProtKB-SubCell"/>
</dbReference>
<dbReference type="GO" id="GO:0042286">
    <property type="term" value="F:glutamate-1-semialdehyde 2,1-aminomutase activity"/>
    <property type="evidence" value="ECO:0007669"/>
    <property type="project" value="UniProtKB-UniRule"/>
</dbReference>
<dbReference type="GO" id="GO:0030170">
    <property type="term" value="F:pyridoxal phosphate binding"/>
    <property type="evidence" value="ECO:0007669"/>
    <property type="project" value="InterPro"/>
</dbReference>
<dbReference type="GO" id="GO:0008483">
    <property type="term" value="F:transaminase activity"/>
    <property type="evidence" value="ECO:0007669"/>
    <property type="project" value="InterPro"/>
</dbReference>
<dbReference type="GO" id="GO:0006782">
    <property type="term" value="P:protoporphyrinogen IX biosynthetic process"/>
    <property type="evidence" value="ECO:0007669"/>
    <property type="project" value="UniProtKB-UniRule"/>
</dbReference>
<dbReference type="CDD" id="cd00610">
    <property type="entry name" value="OAT_like"/>
    <property type="match status" value="1"/>
</dbReference>
<dbReference type="FunFam" id="3.40.640.10:FF:000021">
    <property type="entry name" value="Glutamate-1-semialdehyde 2,1-aminomutase"/>
    <property type="match status" value="1"/>
</dbReference>
<dbReference type="Gene3D" id="3.90.1150.10">
    <property type="entry name" value="Aspartate Aminotransferase, domain 1"/>
    <property type="match status" value="1"/>
</dbReference>
<dbReference type="Gene3D" id="3.40.640.10">
    <property type="entry name" value="Type I PLP-dependent aspartate aminotransferase-like (Major domain)"/>
    <property type="match status" value="1"/>
</dbReference>
<dbReference type="HAMAP" id="MF_00375">
    <property type="entry name" value="HemL_aminotrans_3"/>
    <property type="match status" value="1"/>
</dbReference>
<dbReference type="InterPro" id="IPR004639">
    <property type="entry name" value="4pyrrol_synth_GluAld_NH2Trfase"/>
</dbReference>
<dbReference type="InterPro" id="IPR005814">
    <property type="entry name" value="Aminotrans_3"/>
</dbReference>
<dbReference type="InterPro" id="IPR049704">
    <property type="entry name" value="Aminotrans_3_PPA_site"/>
</dbReference>
<dbReference type="InterPro" id="IPR015424">
    <property type="entry name" value="PyrdxlP-dep_Trfase"/>
</dbReference>
<dbReference type="InterPro" id="IPR015421">
    <property type="entry name" value="PyrdxlP-dep_Trfase_major"/>
</dbReference>
<dbReference type="InterPro" id="IPR015422">
    <property type="entry name" value="PyrdxlP-dep_Trfase_small"/>
</dbReference>
<dbReference type="NCBIfam" id="TIGR00713">
    <property type="entry name" value="hemL"/>
    <property type="match status" value="1"/>
</dbReference>
<dbReference type="NCBIfam" id="NF000818">
    <property type="entry name" value="PRK00062.1"/>
    <property type="match status" value="1"/>
</dbReference>
<dbReference type="PANTHER" id="PTHR43713">
    <property type="entry name" value="GLUTAMATE-1-SEMIALDEHYDE 2,1-AMINOMUTASE"/>
    <property type="match status" value="1"/>
</dbReference>
<dbReference type="PANTHER" id="PTHR43713:SF3">
    <property type="entry name" value="GLUTAMATE-1-SEMIALDEHYDE 2,1-AMINOMUTASE 1, CHLOROPLASTIC-RELATED"/>
    <property type="match status" value="1"/>
</dbReference>
<dbReference type="Pfam" id="PF00202">
    <property type="entry name" value="Aminotran_3"/>
    <property type="match status" value="1"/>
</dbReference>
<dbReference type="SUPFAM" id="SSF53383">
    <property type="entry name" value="PLP-dependent transferases"/>
    <property type="match status" value="1"/>
</dbReference>
<dbReference type="PROSITE" id="PS00600">
    <property type="entry name" value="AA_TRANSFER_CLASS_3"/>
    <property type="match status" value="1"/>
</dbReference>
<feature type="chain" id="PRO_0000382244" description="Glutamate-1-semialdehyde 2,1-aminomutase">
    <location>
        <begin position="1"/>
        <end position="429"/>
    </location>
</feature>
<feature type="modified residue" description="N6-(pyridoxal phosphate)lysine" evidence="1">
    <location>
        <position position="265"/>
    </location>
</feature>
<organism>
    <name type="scientific">Acidobacterium capsulatum (strain ATCC 51196 / DSM 11244 / BCRC 80197 / JCM 7670 / NBRC 15755 / NCIMB 13165 / 161)</name>
    <dbReference type="NCBI Taxonomy" id="240015"/>
    <lineage>
        <taxon>Bacteria</taxon>
        <taxon>Pseudomonadati</taxon>
        <taxon>Acidobacteriota</taxon>
        <taxon>Terriglobia</taxon>
        <taxon>Terriglobales</taxon>
        <taxon>Acidobacteriaceae</taxon>
        <taxon>Acidobacterium</taxon>
    </lineage>
</organism>
<keyword id="KW-0963">Cytoplasm</keyword>
<keyword id="KW-0413">Isomerase</keyword>
<keyword id="KW-0627">Porphyrin biosynthesis</keyword>
<keyword id="KW-0663">Pyridoxal phosphate</keyword>
<keyword id="KW-1185">Reference proteome</keyword>
<accession>C1F911</accession>
<name>GSA_ACIC5</name>
<comment type="catalytic activity">
    <reaction evidence="1">
        <text>(S)-4-amino-5-oxopentanoate = 5-aminolevulinate</text>
        <dbReference type="Rhea" id="RHEA:14265"/>
        <dbReference type="ChEBI" id="CHEBI:57501"/>
        <dbReference type="ChEBI" id="CHEBI:356416"/>
        <dbReference type="EC" id="5.4.3.8"/>
    </reaction>
</comment>
<comment type="cofactor">
    <cofactor evidence="1">
        <name>pyridoxal 5'-phosphate</name>
        <dbReference type="ChEBI" id="CHEBI:597326"/>
    </cofactor>
</comment>
<comment type="pathway">
    <text evidence="1">Porphyrin-containing compound metabolism; protoporphyrin-IX biosynthesis; 5-aminolevulinate from L-glutamyl-tRNA(Glu): step 2/2.</text>
</comment>
<comment type="subunit">
    <text evidence="1">Homodimer.</text>
</comment>
<comment type="subcellular location">
    <subcellularLocation>
        <location evidence="1">Cytoplasm</location>
    </subcellularLocation>
</comment>
<comment type="similarity">
    <text evidence="1">Belongs to the class-III pyridoxal-phosphate-dependent aminotransferase family. HemL subfamily.</text>
</comment>
<proteinExistence type="inferred from homology"/>